<reference key="1">
    <citation type="submission" date="2006-05" db="EMBL/GenBank/DDBJ databases">
        <title>Complete sequence of chromosome 1 of Burkholderia cenocepacia AU 1054.</title>
        <authorList>
            <consortium name="US DOE Joint Genome Institute"/>
            <person name="Copeland A."/>
            <person name="Lucas S."/>
            <person name="Lapidus A."/>
            <person name="Barry K."/>
            <person name="Detter J.C."/>
            <person name="Glavina del Rio T."/>
            <person name="Hammon N."/>
            <person name="Israni S."/>
            <person name="Dalin E."/>
            <person name="Tice H."/>
            <person name="Pitluck S."/>
            <person name="Chain P."/>
            <person name="Malfatti S."/>
            <person name="Shin M."/>
            <person name="Vergez L."/>
            <person name="Schmutz J."/>
            <person name="Larimer F."/>
            <person name="Land M."/>
            <person name="Hauser L."/>
            <person name="Kyrpides N."/>
            <person name="Lykidis A."/>
            <person name="LiPuma J.J."/>
            <person name="Konstantinidis K."/>
            <person name="Tiedje J.M."/>
            <person name="Richardson P."/>
        </authorList>
    </citation>
    <scope>NUCLEOTIDE SEQUENCE [LARGE SCALE GENOMIC DNA]</scope>
    <source>
        <strain>AU 1054</strain>
    </source>
</reference>
<protein>
    <recommendedName>
        <fullName evidence="1">Cell division protein ZapD</fullName>
    </recommendedName>
    <alternativeName>
        <fullName evidence="1">Z ring-associated protein D</fullName>
    </alternativeName>
</protein>
<sequence length="251" mass="28934">MILYEYPFNERIRTLLRLEDLFERFAFFLAQEDPREHHVALTTLFEIAEVTGRADLKSDLMKELERQRQTLAPFRGNPGIEQNALEAVLGEIEQTLANLAQMQGKTGQHLVDNEWLASIRSRAVIPGGTCKFDLPSYYAWQQWPAEQRRQDIAKWMLPMLPLRDAAAIVLRLARESGQASKVMAMQGSYQQMLSGRSYQLMQVRVPPELRVIPEASANKYMLWVRFTMQDGDVRPRAVDIDVPFHLTLCNL</sequence>
<feature type="chain" id="PRO_1000064891" description="Cell division protein ZapD">
    <location>
        <begin position="1"/>
        <end position="251"/>
    </location>
</feature>
<name>ZAPD_BURO1</name>
<comment type="function">
    <text evidence="1">Cell division factor that enhances FtsZ-ring assembly. Directly interacts with FtsZ and promotes bundling of FtsZ protofilaments, with a reduction in FtsZ GTPase activity.</text>
</comment>
<comment type="subunit">
    <text evidence="1">Interacts with FtsZ.</text>
</comment>
<comment type="subcellular location">
    <subcellularLocation>
        <location evidence="1">Cytoplasm</location>
    </subcellularLocation>
    <text evidence="1">Localizes to mid-cell in an FtsZ-dependent manner.</text>
</comment>
<comment type="similarity">
    <text evidence="1">Belongs to the ZapD family.</text>
</comment>
<organism>
    <name type="scientific">Burkholderia orbicola (strain AU 1054)</name>
    <dbReference type="NCBI Taxonomy" id="331271"/>
    <lineage>
        <taxon>Bacteria</taxon>
        <taxon>Pseudomonadati</taxon>
        <taxon>Pseudomonadota</taxon>
        <taxon>Betaproteobacteria</taxon>
        <taxon>Burkholderiales</taxon>
        <taxon>Burkholderiaceae</taxon>
        <taxon>Burkholderia</taxon>
        <taxon>Burkholderia cepacia complex</taxon>
        <taxon>Burkholderia orbicola</taxon>
    </lineage>
</organism>
<accession>Q1BZE9</accession>
<gene>
    <name evidence="1" type="primary">zapD</name>
    <name type="ordered locus">Bcen_0092</name>
</gene>
<proteinExistence type="inferred from homology"/>
<evidence type="ECO:0000255" key="1">
    <source>
        <dbReference type="HAMAP-Rule" id="MF_01092"/>
    </source>
</evidence>
<keyword id="KW-0131">Cell cycle</keyword>
<keyword id="KW-0132">Cell division</keyword>
<keyword id="KW-0963">Cytoplasm</keyword>
<keyword id="KW-0717">Septation</keyword>
<dbReference type="EMBL" id="CP000378">
    <property type="protein sequence ID" value="ABF75006.1"/>
    <property type="molecule type" value="Genomic_DNA"/>
</dbReference>
<dbReference type="SMR" id="Q1BZE9"/>
<dbReference type="HOGENOM" id="CLU_076303_0_1_4"/>
<dbReference type="GO" id="GO:0032153">
    <property type="term" value="C:cell division site"/>
    <property type="evidence" value="ECO:0007669"/>
    <property type="project" value="TreeGrafter"/>
</dbReference>
<dbReference type="GO" id="GO:0005737">
    <property type="term" value="C:cytoplasm"/>
    <property type="evidence" value="ECO:0007669"/>
    <property type="project" value="UniProtKB-SubCell"/>
</dbReference>
<dbReference type="GO" id="GO:0000917">
    <property type="term" value="P:division septum assembly"/>
    <property type="evidence" value="ECO:0007669"/>
    <property type="project" value="UniProtKB-KW"/>
</dbReference>
<dbReference type="GO" id="GO:0043093">
    <property type="term" value="P:FtsZ-dependent cytokinesis"/>
    <property type="evidence" value="ECO:0007669"/>
    <property type="project" value="UniProtKB-UniRule"/>
</dbReference>
<dbReference type="Gene3D" id="1.10.3900.10">
    <property type="entry name" value="YacF-like"/>
    <property type="match status" value="1"/>
</dbReference>
<dbReference type="Gene3D" id="2.60.440.10">
    <property type="entry name" value="YacF-like domains"/>
    <property type="match status" value="1"/>
</dbReference>
<dbReference type="HAMAP" id="MF_01092">
    <property type="entry name" value="ZapD"/>
    <property type="match status" value="1"/>
</dbReference>
<dbReference type="InterPro" id="IPR009777">
    <property type="entry name" value="ZapD"/>
</dbReference>
<dbReference type="InterPro" id="IPR027462">
    <property type="entry name" value="ZapD_C"/>
</dbReference>
<dbReference type="InterPro" id="IPR036268">
    <property type="entry name" value="ZapD_sf"/>
</dbReference>
<dbReference type="NCBIfam" id="NF003656">
    <property type="entry name" value="PRK05287.1-4"/>
    <property type="match status" value="1"/>
</dbReference>
<dbReference type="PANTHER" id="PTHR39455">
    <property type="entry name" value="CELL DIVISION PROTEIN ZAPD"/>
    <property type="match status" value="1"/>
</dbReference>
<dbReference type="PANTHER" id="PTHR39455:SF1">
    <property type="entry name" value="CELL DIVISION PROTEIN ZAPD"/>
    <property type="match status" value="1"/>
</dbReference>
<dbReference type="Pfam" id="PF07072">
    <property type="entry name" value="ZapD"/>
    <property type="match status" value="1"/>
</dbReference>
<dbReference type="SUPFAM" id="SSF160950">
    <property type="entry name" value="YacF-like"/>
    <property type="match status" value="1"/>
</dbReference>